<reference key="1">
    <citation type="journal article" date="2007" name="Am. J. Hum. Genet.">
        <title>A homozygous mutation in a novel zinc-finger protein, ERIS, is responsible for Wolfram syndrome 2.</title>
        <authorList>
            <person name="Amr S."/>
            <person name="Heisey C."/>
            <person name="Zhang M."/>
            <person name="Xia X.J."/>
            <person name="Shows K.H."/>
            <person name="Ajlouni K."/>
            <person name="Pandya A."/>
            <person name="Satin L.S."/>
            <person name="El-Shanti H."/>
            <person name="Shiang R."/>
        </authorList>
    </citation>
    <scope>NUCLEOTIDE SEQUENCE [MRNA]</scope>
    <scope>FUNCTION</scope>
    <scope>SUBCELLULAR LOCATION</scope>
    <scope>TISSUE SPECIFICITY</scope>
    <scope>INVOLVEMENT IN WFS2</scope>
</reference>
<reference key="2">
    <citation type="journal article" date="2004" name="Nat. Genet.">
        <title>Complete sequencing and characterization of 21,243 full-length human cDNAs.</title>
        <authorList>
            <person name="Ota T."/>
            <person name="Suzuki Y."/>
            <person name="Nishikawa T."/>
            <person name="Otsuki T."/>
            <person name="Sugiyama T."/>
            <person name="Irie R."/>
            <person name="Wakamatsu A."/>
            <person name="Hayashi K."/>
            <person name="Sato H."/>
            <person name="Nagai K."/>
            <person name="Kimura K."/>
            <person name="Makita H."/>
            <person name="Sekine M."/>
            <person name="Obayashi M."/>
            <person name="Nishi T."/>
            <person name="Shibahara T."/>
            <person name="Tanaka T."/>
            <person name="Ishii S."/>
            <person name="Yamamoto J."/>
            <person name="Saito K."/>
            <person name="Kawai Y."/>
            <person name="Isono Y."/>
            <person name="Nakamura Y."/>
            <person name="Nagahari K."/>
            <person name="Murakami K."/>
            <person name="Yasuda T."/>
            <person name="Iwayanagi T."/>
            <person name="Wagatsuma M."/>
            <person name="Shiratori A."/>
            <person name="Sudo H."/>
            <person name="Hosoiri T."/>
            <person name="Kaku Y."/>
            <person name="Kodaira H."/>
            <person name="Kondo H."/>
            <person name="Sugawara M."/>
            <person name="Takahashi M."/>
            <person name="Kanda K."/>
            <person name="Yokoi T."/>
            <person name="Furuya T."/>
            <person name="Kikkawa E."/>
            <person name="Omura Y."/>
            <person name="Abe K."/>
            <person name="Kamihara K."/>
            <person name="Katsuta N."/>
            <person name="Sato K."/>
            <person name="Tanikawa M."/>
            <person name="Yamazaki M."/>
            <person name="Ninomiya K."/>
            <person name="Ishibashi T."/>
            <person name="Yamashita H."/>
            <person name="Murakawa K."/>
            <person name="Fujimori K."/>
            <person name="Tanai H."/>
            <person name="Kimata M."/>
            <person name="Watanabe M."/>
            <person name="Hiraoka S."/>
            <person name="Chiba Y."/>
            <person name="Ishida S."/>
            <person name="Ono Y."/>
            <person name="Takiguchi S."/>
            <person name="Watanabe S."/>
            <person name="Yosida M."/>
            <person name="Hotuta T."/>
            <person name="Kusano J."/>
            <person name="Kanehori K."/>
            <person name="Takahashi-Fujii A."/>
            <person name="Hara H."/>
            <person name="Tanase T.-O."/>
            <person name="Nomura Y."/>
            <person name="Togiya S."/>
            <person name="Komai F."/>
            <person name="Hara R."/>
            <person name="Takeuchi K."/>
            <person name="Arita M."/>
            <person name="Imose N."/>
            <person name="Musashino K."/>
            <person name="Yuuki H."/>
            <person name="Oshima A."/>
            <person name="Sasaki N."/>
            <person name="Aotsuka S."/>
            <person name="Yoshikawa Y."/>
            <person name="Matsunawa H."/>
            <person name="Ichihara T."/>
            <person name="Shiohata N."/>
            <person name="Sano S."/>
            <person name="Moriya S."/>
            <person name="Momiyama H."/>
            <person name="Satoh N."/>
            <person name="Takami S."/>
            <person name="Terashima Y."/>
            <person name="Suzuki O."/>
            <person name="Nakagawa S."/>
            <person name="Senoh A."/>
            <person name="Mizoguchi H."/>
            <person name="Goto Y."/>
            <person name="Shimizu F."/>
            <person name="Wakebe H."/>
            <person name="Hishigaki H."/>
            <person name="Watanabe T."/>
            <person name="Sugiyama A."/>
            <person name="Takemoto M."/>
            <person name="Kawakami B."/>
            <person name="Yamazaki M."/>
            <person name="Watanabe K."/>
            <person name="Kumagai A."/>
            <person name="Itakura S."/>
            <person name="Fukuzumi Y."/>
            <person name="Fujimori Y."/>
            <person name="Komiyama M."/>
            <person name="Tashiro H."/>
            <person name="Tanigami A."/>
            <person name="Fujiwara T."/>
            <person name="Ono T."/>
            <person name="Yamada K."/>
            <person name="Fujii Y."/>
            <person name="Ozaki K."/>
            <person name="Hirao M."/>
            <person name="Ohmori Y."/>
            <person name="Kawabata A."/>
            <person name="Hikiji T."/>
            <person name="Kobatake N."/>
            <person name="Inagaki H."/>
            <person name="Ikema Y."/>
            <person name="Okamoto S."/>
            <person name="Okitani R."/>
            <person name="Kawakami T."/>
            <person name="Noguchi S."/>
            <person name="Itoh T."/>
            <person name="Shigeta K."/>
            <person name="Senba T."/>
            <person name="Matsumura K."/>
            <person name="Nakajima Y."/>
            <person name="Mizuno T."/>
            <person name="Morinaga M."/>
            <person name="Sasaki M."/>
            <person name="Togashi T."/>
            <person name="Oyama M."/>
            <person name="Hata H."/>
            <person name="Watanabe M."/>
            <person name="Komatsu T."/>
            <person name="Mizushima-Sugano J."/>
            <person name="Satoh T."/>
            <person name="Shirai Y."/>
            <person name="Takahashi Y."/>
            <person name="Nakagawa K."/>
            <person name="Okumura K."/>
            <person name="Nagase T."/>
            <person name="Nomura N."/>
            <person name="Kikuchi H."/>
            <person name="Masuho Y."/>
            <person name="Yamashita R."/>
            <person name="Nakai K."/>
            <person name="Yada T."/>
            <person name="Nakamura Y."/>
            <person name="Ohara O."/>
            <person name="Isogai T."/>
            <person name="Sugano S."/>
        </authorList>
    </citation>
    <scope>NUCLEOTIDE SEQUENCE [LARGE SCALE MRNA]</scope>
    <source>
        <tissue>Synovium</tissue>
    </source>
</reference>
<reference key="3">
    <citation type="journal article" date="2007" name="BMC Genomics">
        <title>The full-ORF clone resource of the German cDNA consortium.</title>
        <authorList>
            <person name="Bechtel S."/>
            <person name="Rosenfelder H."/>
            <person name="Duda A."/>
            <person name="Schmidt C.P."/>
            <person name="Ernst U."/>
            <person name="Wellenreuther R."/>
            <person name="Mehrle A."/>
            <person name="Schuster C."/>
            <person name="Bahr A."/>
            <person name="Bloecker H."/>
            <person name="Heubner D."/>
            <person name="Hoerlein A."/>
            <person name="Michel G."/>
            <person name="Wedler H."/>
            <person name="Koehrer K."/>
            <person name="Ottenwaelder B."/>
            <person name="Poustka A."/>
            <person name="Wiemann S."/>
            <person name="Schupp I."/>
        </authorList>
    </citation>
    <scope>NUCLEOTIDE SEQUENCE [LARGE SCALE MRNA]</scope>
    <source>
        <tissue>Retina</tissue>
    </source>
</reference>
<reference key="4">
    <citation type="submission" date="2005-07" db="EMBL/GenBank/DDBJ databases">
        <authorList>
            <person name="Mural R.J."/>
            <person name="Istrail S."/>
            <person name="Sutton G.G."/>
            <person name="Florea L."/>
            <person name="Halpern A.L."/>
            <person name="Mobarry C.M."/>
            <person name="Lippert R."/>
            <person name="Walenz B."/>
            <person name="Shatkay H."/>
            <person name="Dew I."/>
            <person name="Miller J.R."/>
            <person name="Flanigan M.J."/>
            <person name="Edwards N.J."/>
            <person name="Bolanos R."/>
            <person name="Fasulo D."/>
            <person name="Halldorsson B.V."/>
            <person name="Hannenhalli S."/>
            <person name="Turner R."/>
            <person name="Yooseph S."/>
            <person name="Lu F."/>
            <person name="Nusskern D.R."/>
            <person name="Shue B.C."/>
            <person name="Zheng X.H."/>
            <person name="Zhong F."/>
            <person name="Delcher A.L."/>
            <person name="Huson D.H."/>
            <person name="Kravitz S.A."/>
            <person name="Mouchard L."/>
            <person name="Reinert K."/>
            <person name="Remington K.A."/>
            <person name="Clark A.G."/>
            <person name="Waterman M.S."/>
            <person name="Eichler E.E."/>
            <person name="Adams M.D."/>
            <person name="Hunkapiller M.W."/>
            <person name="Myers E.W."/>
            <person name="Venter J.C."/>
        </authorList>
    </citation>
    <scope>NUCLEOTIDE SEQUENCE [LARGE SCALE GENOMIC DNA]</scope>
</reference>
<reference key="5">
    <citation type="journal article" date="2004" name="Genome Res.">
        <title>The status, quality, and expansion of the NIH full-length cDNA project: the Mammalian Gene Collection (MGC).</title>
        <authorList>
            <consortium name="The MGC Project Team"/>
        </authorList>
    </citation>
    <scope>NUCLEOTIDE SEQUENCE [LARGE SCALE MRNA]</scope>
    <source>
        <tissue>Cervix</tissue>
    </source>
</reference>
<reference key="6">
    <citation type="submission" date="2005-06" db="UniProtKB">
        <authorList>
            <person name="Bienvenut W.V."/>
        </authorList>
    </citation>
    <scope>PROTEIN SEQUENCE OF 21-32; 82-95 AND 117-131</scope>
    <scope>IDENTIFICATION BY MASS SPECTROMETRY</scope>
    <source>
        <tissue>B-cell lymphoma</tissue>
    </source>
</reference>
<reference key="7">
    <citation type="journal article" date="2007" name="Proc. Natl. Acad. Sci. U.S.A.">
        <title>MitoNEET is an iron-containing outer mitochondrial membrane protein that regulates oxidative capacity.</title>
        <authorList>
            <person name="Wiley S.E."/>
            <person name="Murphy A.N."/>
            <person name="Ross S.A."/>
            <person name="van der Geer P."/>
            <person name="Dixon J.E."/>
        </authorList>
    </citation>
    <scope>COFACTOR</scope>
    <scope>SUBCELLULAR LOCATION</scope>
</reference>
<reference key="8">
    <citation type="journal article" date="2010" name="EMBO J.">
        <title>Antagonism of Beclin 1-dependent autophagy by BCL-2 at the endoplasmic reticulum requires NAF-1.</title>
        <authorList>
            <person name="Chang N.C."/>
            <person name="Nguyen M."/>
            <person name="Germain M."/>
            <person name="Shore G.C."/>
        </authorList>
    </citation>
    <scope>FUNCTION</scope>
    <scope>SUBCELLULAR LOCATION</scope>
    <scope>INTERACTION WITH BCL2; BCL2L1 AND ITPR1</scope>
    <scope>MUTAGENESIS OF CYS-99; CYS-101; CYS-110 AND HIS-114</scope>
</reference>
<reference key="9">
    <citation type="journal article" date="2011" name="BMC Syst. Biol.">
        <title>Initial characterization of the human central proteome.</title>
        <authorList>
            <person name="Burkard T.R."/>
            <person name="Planyavsky M."/>
            <person name="Kaupe I."/>
            <person name="Breitwieser F.P."/>
            <person name="Buerckstuemmer T."/>
            <person name="Bennett K.L."/>
            <person name="Superti-Furga G."/>
            <person name="Colinge J."/>
        </authorList>
    </citation>
    <scope>IDENTIFICATION BY MASS SPECTROMETRY [LARGE SCALE ANALYSIS]</scope>
</reference>
<reference key="10">
    <citation type="journal article" date="2012" name="Proc. Natl. Acad. Sci. U.S.A.">
        <title>N-terminal acetylome analyses and functional insights of the N-terminal acetyltransferase NatB.</title>
        <authorList>
            <person name="Van Damme P."/>
            <person name="Lasa M."/>
            <person name="Polevoda B."/>
            <person name="Gazquez C."/>
            <person name="Elosegui-Artola A."/>
            <person name="Kim D.S."/>
            <person name="De Juan-Pardo E."/>
            <person name="Demeyer K."/>
            <person name="Hole K."/>
            <person name="Larrea E."/>
            <person name="Timmerman E."/>
            <person name="Prieto J."/>
            <person name="Arnesen T."/>
            <person name="Sherman F."/>
            <person name="Gevaert K."/>
            <person name="Aldabe R."/>
        </authorList>
    </citation>
    <scope>IDENTIFICATION BY MASS SPECTROMETRY [LARGE SCALE ANALYSIS]</scope>
</reference>
<reference key="11">
    <citation type="journal article" date="2015" name="Proteomics">
        <title>N-terminome analysis of the human mitochondrial proteome.</title>
        <authorList>
            <person name="Vaca Jacome A.S."/>
            <person name="Rabilloud T."/>
            <person name="Schaeffer-Reiss C."/>
            <person name="Rompais M."/>
            <person name="Ayoub D."/>
            <person name="Lane L."/>
            <person name="Bairoch A."/>
            <person name="Van Dorsselaer A."/>
            <person name="Carapito C."/>
        </authorList>
    </citation>
    <scope>CLEAVAGE OF INITIATOR METHIONINE [LARGE SCALE ANALYSIS]</scope>
    <scope>IDENTIFICATION BY MASS SPECTROMETRY [LARGE SCALE ANALYSIS]</scope>
</reference>
<reference key="12">
    <citation type="journal article" date="2009" name="J. Mol. Biol.">
        <title>Crystal structure of Miner1: The redox-active 2Fe-2S protein causative in Wolfram Syndrome 2.</title>
        <authorList>
            <person name="Conlan A.R."/>
            <person name="Axelrod H.L."/>
            <person name="Cohen A.E."/>
            <person name="Abresch E.C."/>
            <person name="Zuris J."/>
            <person name="Yee D."/>
            <person name="Nechushtai R."/>
            <person name="Jennings P.A."/>
            <person name="Paddock M.L."/>
        </authorList>
    </citation>
    <scope>X-RAY CRYSTALLOGRAPHY (2.1 ANGSTROMS) OF 57-135 OF MUTANT CYS-92 IN COMPLEX WITH 2FE-2S</scope>
    <scope>BIOPHYSICOCHEMICAL PROPERTIES</scope>
    <scope>MUTAGENESIS OF CYS-92</scope>
</reference>
<protein>
    <recommendedName>
        <fullName>CDGSH iron-sulfur domain-containing protein 2</fullName>
    </recommendedName>
    <alternativeName>
        <fullName>Endoplasmic reticulum intermembrane small protein</fullName>
    </alternativeName>
    <alternativeName>
        <fullName>MitoNEET-related 1 protein</fullName>
        <shortName>Miner1</shortName>
    </alternativeName>
    <alternativeName>
        <fullName>Nutrient-deprivation autophagy factor-1</fullName>
        <shortName>NAF-1</shortName>
    </alternativeName>
</protein>
<dbReference type="EMBL" id="AK292134">
    <property type="protein sequence ID" value="BAF84823.1"/>
    <property type="molecule type" value="mRNA"/>
</dbReference>
<dbReference type="EMBL" id="BX537971">
    <property type="protein sequence ID" value="CAD97935.1"/>
    <property type="status" value="ALT_INIT"/>
    <property type="molecule type" value="mRNA"/>
</dbReference>
<dbReference type="EMBL" id="CH471057">
    <property type="protein sequence ID" value="EAX06148.1"/>
    <property type="molecule type" value="Genomic_DNA"/>
</dbReference>
<dbReference type="EMBL" id="BC032300">
    <property type="protein sequence ID" value="AAH32300.1"/>
    <property type="molecule type" value="mRNA"/>
</dbReference>
<dbReference type="CCDS" id="CCDS34040.1"/>
<dbReference type="RefSeq" id="NP_001008389.1">
    <property type="nucleotide sequence ID" value="NM_001008388.5"/>
</dbReference>
<dbReference type="PDB" id="3FNV">
    <property type="method" value="X-ray"/>
    <property type="resolution" value="2.10 A"/>
    <property type="chains" value="A/B=57-135"/>
</dbReference>
<dbReference type="PDB" id="4OO7">
    <property type="method" value="X-ray"/>
    <property type="resolution" value="1.65 A"/>
    <property type="chains" value="A/B=68-135"/>
</dbReference>
<dbReference type="PDB" id="4OOA">
    <property type="method" value="X-ray"/>
    <property type="resolution" value="1.58 A"/>
    <property type="chains" value="A/B/C/D/E/F=68-135"/>
</dbReference>
<dbReference type="PDB" id="7P0P">
    <property type="method" value="X-ray"/>
    <property type="resolution" value="1.74 A"/>
    <property type="chains" value="A/B/C/D=57-135"/>
</dbReference>
<dbReference type="PDBsum" id="3FNV"/>
<dbReference type="PDBsum" id="4OO7"/>
<dbReference type="PDBsum" id="4OOA"/>
<dbReference type="PDBsum" id="7P0P"/>
<dbReference type="SMR" id="Q8N5K1"/>
<dbReference type="BioGRID" id="138922">
    <property type="interactions" value="257"/>
</dbReference>
<dbReference type="CORUM" id="Q8N5K1"/>
<dbReference type="FunCoup" id="Q8N5K1">
    <property type="interactions" value="2259"/>
</dbReference>
<dbReference type="IntAct" id="Q8N5K1">
    <property type="interactions" value="147"/>
</dbReference>
<dbReference type="MINT" id="Q8N5K1"/>
<dbReference type="STRING" id="9606.ENSP00000273986"/>
<dbReference type="BindingDB" id="Q8N5K1"/>
<dbReference type="ChEMBL" id="CHEMBL4523399"/>
<dbReference type="DrugCentral" id="Q8N5K1"/>
<dbReference type="GlyGen" id="Q8N5K1">
    <property type="glycosylation" value="1 site, 1 O-linked glycan (1 site)"/>
</dbReference>
<dbReference type="iPTMnet" id="Q8N5K1"/>
<dbReference type="PhosphoSitePlus" id="Q8N5K1"/>
<dbReference type="SwissPalm" id="Q8N5K1"/>
<dbReference type="BioMuta" id="CISD2"/>
<dbReference type="DMDM" id="74729013"/>
<dbReference type="jPOST" id="Q8N5K1"/>
<dbReference type="MassIVE" id="Q8N5K1"/>
<dbReference type="PaxDb" id="9606-ENSP00000273986"/>
<dbReference type="PeptideAtlas" id="Q8N5K1"/>
<dbReference type="ProteomicsDB" id="72071"/>
<dbReference type="Pumba" id="Q8N5K1"/>
<dbReference type="TopDownProteomics" id="Q8N5K1"/>
<dbReference type="ABCD" id="Q8N5K1">
    <property type="antibodies" value="4 sequenced antibodies"/>
</dbReference>
<dbReference type="Antibodypedia" id="2500">
    <property type="antibodies" value="174 antibodies from 30 providers"/>
</dbReference>
<dbReference type="DNASU" id="493856"/>
<dbReference type="Ensembl" id="ENST00000273986.10">
    <property type="protein sequence ID" value="ENSP00000273986.4"/>
    <property type="gene ID" value="ENSG00000145354.12"/>
</dbReference>
<dbReference type="GeneID" id="493856"/>
<dbReference type="KEGG" id="hsa:493856"/>
<dbReference type="MANE-Select" id="ENST00000273986.10">
    <property type="protein sequence ID" value="ENSP00000273986.4"/>
    <property type="RefSeq nucleotide sequence ID" value="NM_001008388.5"/>
    <property type="RefSeq protein sequence ID" value="NP_001008389.1"/>
</dbReference>
<dbReference type="UCSC" id="uc003hwt.5">
    <property type="organism name" value="human"/>
</dbReference>
<dbReference type="AGR" id="HGNC:24212"/>
<dbReference type="CTD" id="493856"/>
<dbReference type="DisGeNET" id="493856"/>
<dbReference type="GeneCards" id="CISD2"/>
<dbReference type="HGNC" id="HGNC:24212">
    <property type="gene designation" value="CISD2"/>
</dbReference>
<dbReference type="HPA" id="ENSG00000145354">
    <property type="expression patterns" value="Tissue enhanced (liver)"/>
</dbReference>
<dbReference type="MalaCards" id="CISD2"/>
<dbReference type="MIM" id="604928">
    <property type="type" value="phenotype"/>
</dbReference>
<dbReference type="MIM" id="611507">
    <property type="type" value="gene"/>
</dbReference>
<dbReference type="neXtProt" id="NX_Q8N5K1"/>
<dbReference type="OpenTargets" id="ENSG00000145354"/>
<dbReference type="Orphanet" id="3463">
    <property type="disease" value="Wolfram syndrome"/>
</dbReference>
<dbReference type="PharmGKB" id="PA162382300"/>
<dbReference type="VEuPathDB" id="HostDB:ENSG00000145354"/>
<dbReference type="eggNOG" id="KOG3461">
    <property type="taxonomic scope" value="Eukaryota"/>
</dbReference>
<dbReference type="GeneTree" id="ENSGT00940000156660"/>
<dbReference type="HOGENOM" id="CLU_132293_1_0_1"/>
<dbReference type="InParanoid" id="Q8N5K1"/>
<dbReference type="OMA" id="QIRKHEP"/>
<dbReference type="OrthoDB" id="449252at2759"/>
<dbReference type="PAN-GO" id="Q8N5K1">
    <property type="GO annotations" value="3 GO annotations based on evolutionary models"/>
</dbReference>
<dbReference type="PhylomeDB" id="Q8N5K1"/>
<dbReference type="TreeFam" id="TF324661"/>
<dbReference type="PathwayCommons" id="Q8N5K1"/>
<dbReference type="SignaLink" id="Q8N5K1"/>
<dbReference type="BioGRID-ORCS" id="493856">
    <property type="hits" value="11 hits in 1154 CRISPR screens"/>
</dbReference>
<dbReference type="CD-CODE" id="91857CE7">
    <property type="entry name" value="Nucleolus"/>
</dbReference>
<dbReference type="EvolutionaryTrace" id="Q8N5K1"/>
<dbReference type="GenomeRNAi" id="493856"/>
<dbReference type="Pharos" id="Q8N5K1">
    <property type="development level" value="Tbio"/>
</dbReference>
<dbReference type="PRO" id="PR:Q8N5K1"/>
<dbReference type="Proteomes" id="UP000005640">
    <property type="component" value="Chromosome 4"/>
</dbReference>
<dbReference type="RNAct" id="Q8N5K1">
    <property type="molecule type" value="protein"/>
</dbReference>
<dbReference type="Bgee" id="ENSG00000145354">
    <property type="expression patterns" value="Expressed in epithelial cell of pancreas and 182 other cell types or tissues"/>
</dbReference>
<dbReference type="ExpressionAtlas" id="Q8N5K1">
    <property type="expression patterns" value="baseline and differential"/>
</dbReference>
<dbReference type="GO" id="GO:0005783">
    <property type="term" value="C:endoplasmic reticulum"/>
    <property type="evidence" value="ECO:0000314"/>
    <property type="project" value="HPA"/>
</dbReference>
<dbReference type="GO" id="GO:0005789">
    <property type="term" value="C:endoplasmic reticulum membrane"/>
    <property type="evidence" value="ECO:0000314"/>
    <property type="project" value="UniProtKB"/>
</dbReference>
<dbReference type="GO" id="GO:0016020">
    <property type="term" value="C:membrane"/>
    <property type="evidence" value="ECO:0007005"/>
    <property type="project" value="UniProtKB"/>
</dbReference>
<dbReference type="GO" id="GO:0005741">
    <property type="term" value="C:mitochondrial outer membrane"/>
    <property type="evidence" value="ECO:0000250"/>
    <property type="project" value="UniProtKB"/>
</dbReference>
<dbReference type="GO" id="GO:0097038">
    <property type="term" value="C:perinuclear endoplasmic reticulum"/>
    <property type="evidence" value="ECO:0000314"/>
    <property type="project" value="UniProtKB"/>
</dbReference>
<dbReference type="GO" id="GO:0032991">
    <property type="term" value="C:protein-containing complex"/>
    <property type="evidence" value="ECO:0000314"/>
    <property type="project" value="LIFEdb"/>
</dbReference>
<dbReference type="GO" id="GO:0051537">
    <property type="term" value="F:2 iron, 2 sulfur cluster binding"/>
    <property type="evidence" value="ECO:0000314"/>
    <property type="project" value="UniProtKB"/>
</dbReference>
<dbReference type="GO" id="GO:0046872">
    <property type="term" value="F:metal ion binding"/>
    <property type="evidence" value="ECO:0007669"/>
    <property type="project" value="UniProtKB-KW"/>
</dbReference>
<dbReference type="GO" id="GO:0042803">
    <property type="term" value="F:protein homodimerization activity"/>
    <property type="evidence" value="ECO:0000314"/>
    <property type="project" value="UniProtKB"/>
</dbReference>
<dbReference type="GO" id="GO:0003723">
    <property type="term" value="F:RNA binding"/>
    <property type="evidence" value="ECO:0007005"/>
    <property type="project" value="UniProtKB"/>
</dbReference>
<dbReference type="GO" id="GO:0000422">
    <property type="term" value="P:autophagy of mitochondrion"/>
    <property type="evidence" value="ECO:0000318"/>
    <property type="project" value="GO_Central"/>
</dbReference>
<dbReference type="GO" id="GO:0010506">
    <property type="term" value="P:regulation of autophagy"/>
    <property type="evidence" value="ECO:0000315"/>
    <property type="project" value="UniProtKB"/>
</dbReference>
<dbReference type="FunFam" id="3.40.5.90:FF:000001">
    <property type="entry name" value="CDGSH iron-sulfur domain-containing protein 1"/>
    <property type="match status" value="1"/>
</dbReference>
<dbReference type="Gene3D" id="3.40.5.90">
    <property type="entry name" value="CDGSH iron-sulfur domain, mitoNEET-type"/>
    <property type="match status" value="1"/>
</dbReference>
<dbReference type="InterPro" id="IPR045131">
    <property type="entry name" value="CISD1/2"/>
</dbReference>
<dbReference type="InterPro" id="IPR018967">
    <property type="entry name" value="FeS-contain_CDGSH-typ"/>
</dbReference>
<dbReference type="InterPro" id="IPR019610">
    <property type="entry name" value="FeS-contain_mitoNEET_N"/>
</dbReference>
<dbReference type="InterPro" id="IPR042216">
    <property type="entry name" value="MitoNEET_CISD"/>
</dbReference>
<dbReference type="PANTHER" id="PTHR13680">
    <property type="entry name" value="CDGSH IRON-SULFUR DOMAIN-CONTAINING PROTEIN 1"/>
    <property type="match status" value="1"/>
</dbReference>
<dbReference type="PANTHER" id="PTHR13680:SF33">
    <property type="entry name" value="CDGSH IRON-SULFUR DOMAIN-CONTAINING PROTEIN 2"/>
    <property type="match status" value="1"/>
</dbReference>
<dbReference type="Pfam" id="PF10660">
    <property type="entry name" value="MitoNEET_N"/>
    <property type="match status" value="1"/>
</dbReference>
<dbReference type="Pfam" id="PF09360">
    <property type="entry name" value="zf-CDGSH"/>
    <property type="match status" value="1"/>
</dbReference>
<dbReference type="SMART" id="SM00704">
    <property type="entry name" value="ZnF_CDGSH"/>
    <property type="match status" value="1"/>
</dbReference>
<name>CISD2_HUMAN</name>
<accession>Q8N5K1</accession>
<accession>Q7Z3D5</accession>
<comment type="function">
    <text evidence="3 5">Regulator of autophagy that contributes to antagonize BECN1-mediated cellular autophagy at the endoplasmic reticulum. Participates in the interaction of BCL2 with BECN1 and is required for BCL2-mediated depression of endoplasmic reticulum Ca(2+) stores during autophagy. Contributes to BIK-initiated autophagy, while it is not involved in BIK-dependent activation of caspases. Involved in life span control, probably via its function as regulator of autophagy.</text>
</comment>
<comment type="cofactor">
    <cofactor evidence="2">
        <name>[2Fe-2S] cluster</name>
        <dbReference type="ChEBI" id="CHEBI:190135"/>
    </cofactor>
    <text evidence="2">Binds 1 [2Fe-2S] cluster.</text>
</comment>
<comment type="biophysicochemical properties">
    <redoxPotential>
        <text evidence="4">E is 0 +/- 10 mV for 2Fe-2S at pH 7.5.</text>
    </redoxPotential>
</comment>
<comment type="subunit">
    <text evidence="4 5">Homodimer. Interacts with BCL2; the interaction is direct and disrupted by BIK interaction with BCL2. Interacts with BCL2L1. Interacts with ITPR1.</text>
</comment>
<comment type="interaction">
    <interactant intactId="EBI-1045797">
        <id>Q8N5K1</id>
    </interactant>
    <interactant intactId="EBI-25884472">
        <id>P26436</id>
        <label>ACRV1</label>
    </interactant>
    <organismsDiffer>false</organismsDiffer>
    <experiments>3</experiments>
</comment>
<comment type="interaction">
    <interactant intactId="EBI-1045797">
        <id>Q8N5K1</id>
    </interactant>
    <interactant intactId="EBI-11957045">
        <id>Q9NVV5-2</id>
        <label>AIG1</label>
    </interactant>
    <organismsDiffer>false</organismsDiffer>
    <experiments>3</experiments>
</comment>
<comment type="interaction">
    <interactant intactId="EBI-1045797">
        <id>Q8N5K1</id>
    </interactant>
    <interactant intactId="EBI-4290634">
        <id>Q9BQE5</id>
        <label>APOL2</label>
    </interactant>
    <organismsDiffer>false</organismsDiffer>
    <experiments>3</experiments>
</comment>
<comment type="interaction">
    <interactant intactId="EBI-1045797">
        <id>Q8N5K1</id>
    </interactant>
    <interactant intactId="EBI-12820279">
        <id>Q96PS8</id>
        <label>AQP10</label>
    </interactant>
    <organismsDiffer>false</organismsDiffer>
    <experiments>3</experiments>
</comment>
<comment type="interaction">
    <interactant intactId="EBI-1045797">
        <id>Q8N5K1</id>
    </interactant>
    <interactant intactId="EBI-2410266">
        <id>Q8WXF7</id>
        <label>ATL1</label>
    </interactant>
    <organismsDiffer>false</organismsDiffer>
    <experiments>3</experiments>
</comment>
<comment type="interaction">
    <interactant intactId="EBI-1045797">
        <id>Q8N5K1</id>
    </interactant>
    <interactant intactId="EBI-77694">
        <id>P10415</id>
        <label>BCL2</label>
    </interactant>
    <organismsDiffer>false</organismsDiffer>
    <experiments>2</experiments>
</comment>
<comment type="interaction">
    <interactant intactId="EBI-1045797">
        <id>Q8N5K1</id>
    </interactant>
    <interactant intactId="EBI-707714">
        <id>Q92843</id>
        <label>BCL2L2</label>
    </interactant>
    <organismsDiffer>false</organismsDiffer>
    <experiments>3</experiments>
</comment>
<comment type="interaction">
    <interactant intactId="EBI-1045797">
        <id>Q8N5K1</id>
    </interactant>
    <interactant intactId="EBI-749204">
        <id>O15155</id>
        <label>BET1</label>
    </interactant>
    <organismsDiffer>false</organismsDiffer>
    <experiments>3</experiments>
</comment>
<comment type="interaction">
    <interactant intactId="EBI-1045797">
        <id>Q8N5K1</id>
    </interactant>
    <interactant intactId="EBI-3922513">
        <id>O95393</id>
        <label>BMP10</label>
    </interactant>
    <organismsDiffer>false</organismsDiffer>
    <experiments>3</experiments>
</comment>
<comment type="interaction">
    <interactant intactId="EBI-1045797">
        <id>Q8N5K1</id>
    </interactant>
    <interactant intactId="EBI-8648738">
        <id>Q8WVV5</id>
        <label>BTN2A2</label>
    </interactant>
    <organismsDiffer>false</organismsDiffer>
    <experiments>3</experiments>
</comment>
<comment type="interaction">
    <interactant intactId="EBI-1045797">
        <id>Q8N5K1</id>
    </interactant>
    <interactant intactId="EBI-747505">
        <id>Q8TAB5</id>
        <label>C1orf216</label>
    </interactant>
    <organismsDiffer>false</organismsDiffer>
    <experiments>3</experiments>
</comment>
<comment type="interaction">
    <interactant intactId="EBI-1045797">
        <id>Q8N5K1</id>
    </interactant>
    <interactant intactId="EBI-12822627">
        <id>O14523</id>
        <label>C2CD2L</label>
    </interactant>
    <organismsDiffer>false</organismsDiffer>
    <experiments>3</experiments>
</comment>
<comment type="interaction">
    <interactant intactId="EBI-1045797">
        <id>Q8N5K1</id>
    </interactant>
    <interactant intactId="EBI-12003442">
        <id>Q8WVX3-2</id>
        <label>C4orf3</label>
    </interactant>
    <organismsDiffer>false</organismsDiffer>
    <experiments>3</experiments>
</comment>
<comment type="interaction">
    <interactant intactId="EBI-1045797">
        <id>Q8N5K1</id>
    </interactant>
    <interactant intactId="EBI-358858">
        <id>O14735</id>
        <label>CDIPT</label>
    </interactant>
    <organismsDiffer>false</organismsDiffer>
    <experiments>3</experiments>
</comment>
<comment type="interaction">
    <interactant intactId="EBI-1045797">
        <id>Q8N5K1</id>
    </interactant>
    <interactant intactId="EBI-11579371">
        <id>Q9BXR6</id>
        <label>CFHR5</label>
    </interactant>
    <organismsDiffer>false</organismsDiffer>
    <experiments>3</experiments>
</comment>
<comment type="interaction">
    <interactant intactId="EBI-1045797">
        <id>Q8N5K1</id>
    </interactant>
    <interactant intactId="EBI-13372810">
        <id>P78369</id>
        <label>CLDN10</label>
    </interactant>
    <organismsDiffer>false</organismsDiffer>
    <experiments>3</experiments>
</comment>
<comment type="interaction">
    <interactant intactId="EBI-1045797">
        <id>Q8N5K1</id>
    </interactant>
    <interactant intactId="EBI-6165897">
        <id>Q9NWW5</id>
        <label>CLN6</label>
    </interactant>
    <organismsDiffer>false</organismsDiffer>
    <experiments>3</experiments>
</comment>
<comment type="interaction">
    <interactant intactId="EBI-1045797">
        <id>Q8N5K1</id>
    </interactant>
    <interactant intactId="EBI-2680384">
        <id>Q9BQA9</id>
        <label>CYBC1</label>
    </interactant>
    <organismsDiffer>false</organismsDiffer>
    <experiments>3</experiments>
</comment>
<comment type="interaction">
    <interactant intactId="EBI-1045797">
        <id>Q8N5K1</id>
    </interactant>
    <interactant intactId="EBI-2339219">
        <id>Q08426</id>
        <label>EHHADH</label>
    </interactant>
    <organismsDiffer>false</organismsDiffer>
    <experiments>3</experiments>
</comment>
<comment type="interaction">
    <interactant intactId="EBI-1045797">
        <id>Q8N5K1</id>
    </interactant>
    <interactant intactId="EBI-489887">
        <id>P50402</id>
        <label>EMD</label>
    </interactant>
    <organismsDiffer>false</organismsDiffer>
    <experiments>3</experiments>
</comment>
<comment type="interaction">
    <interactant intactId="EBI-1045797">
        <id>Q8N5K1</id>
    </interactant>
    <interactant intactId="EBI-12118888">
        <id>Q96D05-2</id>
        <label>FAM241B</label>
    </interactant>
    <organismsDiffer>false</organismsDiffer>
    <experiments>3</experiments>
</comment>
<comment type="interaction">
    <interactant intactId="EBI-1045797">
        <id>Q8N5K1</id>
    </interactant>
    <interactant intactId="EBI-3925203">
        <id>Q8N3T1</id>
        <label>GALNT15</label>
    </interactant>
    <organismsDiffer>false</organismsDiffer>
    <experiments>3</experiments>
</comment>
<comment type="interaction">
    <interactant intactId="EBI-1045797">
        <id>Q8N5K1</id>
    </interactant>
    <interactant intactId="EBI-3436637">
        <id>P01350</id>
        <label>GAST</label>
    </interactant>
    <organismsDiffer>false</organismsDiffer>
    <experiments>3</experiments>
</comment>
<comment type="interaction">
    <interactant intactId="EBI-1045797">
        <id>Q8N5K1</id>
    </interactant>
    <interactant intactId="EBI-2927498">
        <id>O60883</id>
        <label>GPR37L1</label>
    </interactant>
    <organismsDiffer>false</organismsDiffer>
    <experiments>3</experiments>
</comment>
<comment type="interaction">
    <interactant intactId="EBI-1045797">
        <id>Q8N5K1</id>
    </interactant>
    <interactant intactId="EBI-5916693">
        <id>Q9HCP6</id>
        <label>HHATL</label>
    </interactant>
    <organismsDiffer>false</organismsDiffer>
    <experiments>3</experiments>
</comment>
<comment type="interaction">
    <interactant intactId="EBI-1045797">
        <id>Q8N5K1</id>
    </interactant>
    <interactant intactId="EBI-1748945">
        <id>P46695</id>
        <label>IER3</label>
    </interactant>
    <organismsDiffer>false</organismsDiffer>
    <experiments>3</experiments>
</comment>
<comment type="interaction">
    <interactant intactId="EBI-1045797">
        <id>Q8N5K1</id>
    </interactant>
    <interactant intactId="EBI-8632435">
        <id>P43628</id>
        <label>KIR2DL3</label>
    </interactant>
    <organismsDiffer>false</organismsDiffer>
    <experiments>3</experiments>
</comment>
<comment type="interaction">
    <interactant intactId="EBI-1045797">
        <id>Q8N5K1</id>
    </interactant>
    <interactant intactId="EBI-750776">
        <id>O95214</id>
        <label>LEPROTL1</label>
    </interactant>
    <organismsDiffer>false</organismsDiffer>
    <experiments>3</experiments>
</comment>
<comment type="interaction">
    <interactant intactId="EBI-1045797">
        <id>Q8N5K1</id>
    </interactant>
    <interactant intactId="EBI-2830349">
        <id>Q7Z4F1</id>
        <label>LRP10</label>
    </interactant>
    <organismsDiffer>false</organismsDiffer>
    <experiments>3</experiments>
</comment>
<comment type="interaction">
    <interactant intactId="EBI-1045797">
        <id>Q8N5K1</id>
    </interactant>
    <interactant intactId="EBI-12243024">
        <id>Q9Y2E5</id>
        <label>MAN2B2</label>
    </interactant>
    <organismsDiffer>false</organismsDiffer>
    <experiments>3</experiments>
</comment>
<comment type="interaction">
    <interactant intactId="EBI-1045797">
        <id>Q8N5K1</id>
    </interactant>
    <interactant intactId="EBI-8449636">
        <id>P30301</id>
        <label>MIP</label>
    </interactant>
    <organismsDiffer>false</organismsDiffer>
    <experiments>3</experiments>
</comment>
<comment type="interaction">
    <interactant intactId="EBI-1045797">
        <id>Q8N5K1</id>
    </interactant>
    <interactant intactId="EBI-3921185">
        <id>Q9H115</id>
        <label>NAPB</label>
    </interactant>
    <organismsDiffer>false</organismsDiffer>
    <experiments>3</experiments>
</comment>
<comment type="interaction">
    <interactant intactId="EBI-1045797">
        <id>Q8N5K1</id>
    </interactant>
    <interactant intactId="EBI-12051377">
        <id>Q8N912</id>
        <label>NRAC</label>
    </interactant>
    <organismsDiffer>false</organismsDiffer>
    <experiments>3</experiments>
</comment>
<comment type="interaction">
    <interactant intactId="EBI-1045797">
        <id>Q8N5K1</id>
    </interactant>
    <interactant intactId="EBI-8637292">
        <id>Q8WWG1</id>
        <label>NRG4</label>
    </interactant>
    <organismsDiffer>false</organismsDiffer>
    <experiments>3</experiments>
</comment>
<comment type="interaction">
    <interactant intactId="EBI-1045797">
        <id>Q8N5K1</id>
    </interactant>
    <interactant intactId="EBI-6380741">
        <id>P42857</id>
        <label>NSG1</label>
    </interactant>
    <organismsDiffer>false</organismsDiffer>
    <experiments>3</experiments>
</comment>
<comment type="interaction">
    <interactant intactId="EBI-1045797">
        <id>Q8N5K1</id>
    </interactant>
    <interactant intactId="EBI-12092917">
        <id>Q9UHJ9-5</id>
        <label>PGAP2</label>
    </interactant>
    <organismsDiffer>false</organismsDiffer>
    <experiments>3</experiments>
</comment>
<comment type="interaction">
    <interactant intactId="EBI-1045797">
        <id>Q8N5K1</id>
    </interactant>
    <interactant intactId="EBI-10485931">
        <id>Q5VZY2</id>
        <label>PLPP4</label>
    </interactant>
    <organismsDiffer>false</organismsDiffer>
    <experiments>3</experiments>
</comment>
<comment type="interaction">
    <interactant intactId="EBI-1045797">
        <id>Q8N5K1</id>
    </interactant>
    <interactant intactId="EBI-12955265">
        <id>Q96GM1</id>
        <label>PLPPR2</label>
    </interactant>
    <organismsDiffer>false</organismsDiffer>
    <experiments>3</experiments>
</comment>
<comment type="interaction">
    <interactant intactId="EBI-1045797">
        <id>Q8N5K1</id>
    </interactant>
    <interactant intactId="EBI-1045072">
        <id>Q96T60</id>
        <label>PNKP</label>
    </interactant>
    <organismsDiffer>false</organismsDiffer>
    <experiments>3</experiments>
</comment>
<comment type="interaction">
    <interactant intactId="EBI-1045797">
        <id>Q8N5K1</id>
    </interactant>
    <interactant intactId="EBI-3912424">
        <id>Q8WZA1</id>
        <label>POMGNT1</label>
    </interactant>
    <organismsDiffer>false</organismsDiffer>
    <experiments>3</experiments>
</comment>
<comment type="interaction">
    <interactant intactId="EBI-1045797">
        <id>Q8N5K1</id>
    </interactant>
    <interactant intactId="EBI-10244780">
        <id>Q5QGT7</id>
        <label>RTP2</label>
    </interactant>
    <organismsDiffer>false</organismsDiffer>
    <experiments>3</experiments>
</comment>
<comment type="interaction">
    <interactant intactId="EBI-1045797">
        <id>Q8N5K1</id>
    </interactant>
    <interactant intactId="EBI-8636004">
        <id>Q96GQ5</id>
        <label>RUSF1</label>
    </interactant>
    <organismsDiffer>false</organismsDiffer>
    <experiments>3</experiments>
</comment>
<comment type="interaction">
    <interactant intactId="EBI-1045797">
        <id>Q8N5K1</id>
    </interactant>
    <interactant intactId="EBI-8652744">
        <id>Q96IW7</id>
        <label>SEC22A</label>
    </interactant>
    <organismsDiffer>false</organismsDiffer>
    <experiments>3</experiments>
</comment>
<comment type="interaction">
    <interactant intactId="EBI-1045797">
        <id>Q8N5K1</id>
    </interactant>
    <interactant intactId="EBI-749270">
        <id>Q8N6R1</id>
        <label>SERP2</label>
    </interactant>
    <organismsDiffer>false</organismsDiffer>
    <experiments>3</experiments>
</comment>
<comment type="interaction">
    <interactant intactId="EBI-1045797">
        <id>Q8N5K1</id>
    </interactant>
    <interactant intactId="EBI-12938720">
        <id>Q8WWT9</id>
        <label>SLC13A3</label>
    </interactant>
    <organismsDiffer>false</organismsDiffer>
    <experiments>3</experiments>
</comment>
<comment type="interaction">
    <interactant intactId="EBI-1045797">
        <id>Q8N5K1</id>
    </interactant>
    <interactant intactId="EBI-10281213">
        <id>Q969S0</id>
        <label>SLC35B4</label>
    </interactant>
    <organismsDiffer>false</organismsDiffer>
    <experiments>3</experiments>
</comment>
<comment type="interaction">
    <interactant intactId="EBI-1045797">
        <id>Q8N5K1</id>
    </interactant>
    <interactant intactId="EBI-12188413">
        <id>B2RUZ4</id>
        <label>SMIM1</label>
    </interactant>
    <organismsDiffer>false</organismsDiffer>
    <experiments>3</experiments>
</comment>
<comment type="interaction">
    <interactant intactId="EBI-1045797">
        <id>Q8N5K1</id>
    </interactant>
    <interactant intactId="EBI-11957067">
        <id>Q6UX34</id>
        <label>SNORC</label>
    </interactant>
    <organismsDiffer>false</organismsDiffer>
    <experiments>3</experiments>
</comment>
<comment type="interaction">
    <interactant intactId="EBI-1045797">
        <id>Q8N5K1</id>
    </interactant>
    <interactant intactId="EBI-11959123">
        <id>Q99932-2</id>
        <label>SPAG8</label>
    </interactant>
    <organismsDiffer>false</organismsDiffer>
    <experiments>3</experiments>
</comment>
<comment type="interaction">
    <interactant intactId="EBI-1045797">
        <id>Q8N5K1</id>
    </interactant>
    <interactant intactId="EBI-357085">
        <id>Q9UNE7</id>
        <label>STUB1</label>
    </interactant>
    <organismsDiffer>false</organismsDiffer>
    <experiments>3</experiments>
</comment>
<comment type="interaction">
    <interactant intactId="EBI-1045797">
        <id>Q8N5K1</id>
    </interactant>
    <interactant intactId="EBI-2691717">
        <id>Q86Y82</id>
        <label>STX12</label>
    </interactant>
    <organismsDiffer>false</organismsDiffer>
    <experiments>3</experiments>
</comment>
<comment type="interaction">
    <interactant intactId="EBI-1045797">
        <id>Q8N5K1</id>
    </interactant>
    <interactant intactId="EBI-3221827">
        <id>O15400</id>
        <label>STX7</label>
    </interactant>
    <organismsDiffer>false</organismsDiffer>
    <experiments>3</experiments>
</comment>
<comment type="interaction">
    <interactant intactId="EBI-1045797">
        <id>Q8N5K1</id>
    </interactant>
    <interactant intactId="EBI-311394">
        <id>Q9C0I4</id>
        <label>THSD7B</label>
    </interactant>
    <organismsDiffer>false</organismsDiffer>
    <experiments>3</experiments>
</comment>
<comment type="interaction">
    <interactant intactId="EBI-1045797">
        <id>Q8N5K1</id>
    </interactant>
    <interactant intactId="EBI-13046724">
        <id>Q14656</id>
        <label>TMEM187</label>
    </interactant>
    <organismsDiffer>false</organismsDiffer>
    <experiments>3</experiments>
</comment>
<comment type="interaction">
    <interactant intactId="EBI-1045797">
        <id>Q8N5K1</id>
    </interactant>
    <interactant intactId="EBI-12887458">
        <id>Q9BU79</id>
        <label>TMEM243</label>
    </interactant>
    <organismsDiffer>false</organismsDiffer>
    <experiments>3</experiments>
</comment>
<comment type="interaction">
    <interactant intactId="EBI-1045797">
        <id>Q8N5K1</id>
    </interactant>
    <interactant intactId="EBI-721293">
        <id>Q9BTV4</id>
        <label>TMEM43</label>
    </interactant>
    <organismsDiffer>false</organismsDiffer>
    <experiments>3</experiments>
</comment>
<comment type="interaction">
    <interactant intactId="EBI-1045797">
        <id>Q8N5K1</id>
    </interactant>
    <interactant intactId="EBI-12015604">
        <id>Q8N2M4</id>
        <label>TMEM86A</label>
    </interactant>
    <organismsDiffer>false</organismsDiffer>
    <experiments>3</experiments>
</comment>
<comment type="interaction">
    <interactant intactId="EBI-1045797">
        <id>Q8N5K1</id>
    </interactant>
    <interactant intactId="EBI-12045841">
        <id>Q86UF1</id>
        <label>TSPAN33</label>
    </interactant>
    <organismsDiffer>false</organismsDiffer>
    <experiments>3</experiments>
</comment>
<comment type="interaction">
    <interactant intactId="EBI-1045797">
        <id>Q8N5K1</id>
    </interactant>
    <interactant intactId="EBI-10210710">
        <id>P49638</id>
        <label>TTPA</label>
    </interactant>
    <organismsDiffer>false</organismsDiffer>
    <experiments>5</experiments>
</comment>
<comment type="interaction">
    <interactant intactId="EBI-1045797">
        <id>Q8N5K1</id>
    </interactant>
    <interactant intactId="EBI-744953">
        <id>O75379</id>
        <label>VAMP4</label>
    </interactant>
    <organismsDiffer>false</organismsDiffer>
    <experiments>3</experiments>
</comment>
<comment type="interaction">
    <interactant intactId="EBI-1045797">
        <id>Q8N5K1</id>
    </interactant>
    <interactant intactId="EBI-11337915">
        <id>Q8N0U8</id>
        <label>VKORC1L1</label>
    </interactant>
    <organismsDiffer>false</organismsDiffer>
    <experiments>3</experiments>
</comment>
<comment type="interaction">
    <interactant intactId="EBI-1045797">
        <id>Q8N5K1</id>
    </interactant>
    <interactant intactId="EBI-751210">
        <id>Q96EC8</id>
        <label>YIPF6</label>
    </interactant>
    <organismsDiffer>false</organismsDiffer>
    <experiments>3</experiments>
</comment>
<comment type="subcellular location">
    <subcellularLocation>
        <location>Endoplasmic reticulum membrane</location>
        <topology>Single-pass membrane protein</topology>
    </subcellularLocation>
    <subcellularLocation>
        <location>Mitochondrion outer membrane</location>
        <topology>Single-pass membrane protein</topology>
    </subcellularLocation>
    <text>According to PubMed:20010695, it mainly localizes to the endoplasmic reticulum. However, experiments in mouse showed that it mainly localizes to the mitochondrion outer membrane.</text>
</comment>
<comment type="tissue specificity">
    <text evidence="3">Testis, small intestine, kidney, lung, brain, heart, pancreas and platelets.</text>
</comment>
<comment type="disease" evidence="3">
    <disease id="DI-02423">
        <name>Wolfram syndrome 2</name>
        <acronym>WFS2</acronym>
        <description>A rare disorder characterized by juvenile-onset insulin-dependent diabetes mellitus with optic atrophy. Other manifestations include diabetes insipidus, sensorineural deafness, dementia, psychiatric illnesses. WFS2 patients additionally show a strong bleeding tendency and gastrointestinal ulceration. Diabetes insipidus may be absent.</description>
        <dbReference type="MIM" id="604928"/>
    </disease>
    <text>The disease is caused by variants affecting the gene represented in this entry.</text>
</comment>
<comment type="similarity">
    <text evidence="6">Belongs to the CISD protein family. CISD2 subfamily.</text>
</comment>
<comment type="caution">
    <text evidence="7 8">Although initially thought (PubMed:17846994) to be a zinc-finger protein, it was later shown (PubMed:17376863) that it binds 1 2Fe-2S cluster instead.</text>
</comment>
<comment type="sequence caution" evidence="6">
    <conflict type="erroneous initiation">
        <sequence resource="EMBL-CDS" id="CAD97935"/>
    </conflict>
</comment>
<evidence type="ECO:0000255" key="1"/>
<evidence type="ECO:0000269" key="2">
    <source>
    </source>
</evidence>
<evidence type="ECO:0000269" key="3">
    <source>
    </source>
</evidence>
<evidence type="ECO:0000269" key="4">
    <source>
    </source>
</evidence>
<evidence type="ECO:0000269" key="5">
    <source>
    </source>
</evidence>
<evidence type="ECO:0000305" key="6"/>
<evidence type="ECO:0000305" key="7">
    <source>
    </source>
</evidence>
<evidence type="ECO:0000305" key="8">
    <source>
    </source>
</evidence>
<evidence type="ECO:0007744" key="9">
    <source>
    </source>
</evidence>
<evidence type="ECO:0007829" key="10">
    <source>
        <dbReference type="PDB" id="4OOA"/>
    </source>
</evidence>
<organism>
    <name type="scientific">Homo sapiens</name>
    <name type="common">Human</name>
    <dbReference type="NCBI Taxonomy" id="9606"/>
    <lineage>
        <taxon>Eukaryota</taxon>
        <taxon>Metazoa</taxon>
        <taxon>Chordata</taxon>
        <taxon>Craniata</taxon>
        <taxon>Vertebrata</taxon>
        <taxon>Euteleostomi</taxon>
        <taxon>Mammalia</taxon>
        <taxon>Eutheria</taxon>
        <taxon>Euarchontoglires</taxon>
        <taxon>Primates</taxon>
        <taxon>Haplorrhini</taxon>
        <taxon>Catarrhini</taxon>
        <taxon>Hominidae</taxon>
        <taxon>Homo</taxon>
    </lineage>
</organism>
<gene>
    <name type="primary">CISD2</name>
    <name type="synonym">CDGSH2</name>
    <name type="synonym">ERIS</name>
    <name type="synonym">ZCD2</name>
</gene>
<feature type="initiator methionine" description="Removed" evidence="9">
    <location>
        <position position="1"/>
    </location>
</feature>
<feature type="chain" id="PRO_0000316005" description="CDGSH iron-sulfur domain-containing protein 2">
    <location>
        <begin position="2"/>
        <end position="135"/>
    </location>
</feature>
<feature type="topological domain" description="Lumenal" evidence="1">
    <location>
        <begin position="2"/>
        <end position="37"/>
    </location>
</feature>
<feature type="transmembrane region" description="Helical" evidence="1">
    <location>
        <begin position="38"/>
        <end position="60"/>
    </location>
</feature>
<feature type="topological domain" description="Cytoplasmic" evidence="1">
    <location>
        <begin position="61"/>
        <end position="135"/>
    </location>
</feature>
<feature type="binding site">
    <location>
        <position position="99"/>
    </location>
    <ligand>
        <name>[2Fe-2S] cluster</name>
        <dbReference type="ChEBI" id="CHEBI:190135"/>
    </ligand>
</feature>
<feature type="binding site">
    <location>
        <position position="101"/>
    </location>
    <ligand>
        <name>[2Fe-2S] cluster</name>
        <dbReference type="ChEBI" id="CHEBI:190135"/>
    </ligand>
</feature>
<feature type="binding site">
    <location>
        <position position="110"/>
    </location>
    <ligand>
        <name>[2Fe-2S] cluster</name>
        <dbReference type="ChEBI" id="CHEBI:190135"/>
    </ligand>
</feature>
<feature type="binding site">
    <location>
        <position position="114"/>
    </location>
    <ligand>
        <name>[2Fe-2S] cluster</name>
        <dbReference type="ChEBI" id="CHEBI:190135"/>
    </ligand>
</feature>
<feature type="mutagenesis site" description="Has the same optical signature of the native protein and improves yields of purified protein and a decreased tendency to aggregate." evidence="4">
    <original>C</original>
    <variation>S</variation>
    <location>
        <position position="92"/>
    </location>
</feature>
<feature type="mutagenesis site" description="Impairs interaction with BCL2; when associated with S-101; S-110 and Q-114." evidence="5">
    <original>C</original>
    <variation>S</variation>
    <location>
        <position position="99"/>
    </location>
</feature>
<feature type="mutagenesis site" description="Impairs interaction with BCL2; when associated with S-99; S-110 and Q-114." evidence="5">
    <original>C</original>
    <variation>S</variation>
    <location>
        <position position="101"/>
    </location>
</feature>
<feature type="mutagenesis site" description="Impairs interaction with BCL2; when associated with S-99; S-101 and Q-114." evidence="5">
    <original>C</original>
    <variation>S</variation>
    <location>
        <position position="110"/>
    </location>
</feature>
<feature type="mutagenesis site" description="Impairs interaction with BCL2; when associated with S-99; S-101 and S-110." evidence="5">
    <original>H</original>
    <variation>Q</variation>
    <location>
        <position position="114"/>
    </location>
</feature>
<feature type="turn" evidence="10">
    <location>
        <begin position="75"/>
        <end position="78"/>
    </location>
</feature>
<feature type="strand" evidence="10">
    <location>
        <begin position="79"/>
        <end position="87"/>
    </location>
</feature>
<feature type="helix" evidence="10">
    <location>
        <begin position="88"/>
        <end position="90"/>
    </location>
</feature>
<feature type="strand" evidence="10">
    <location>
        <begin position="93"/>
        <end position="98"/>
    </location>
</feature>
<feature type="strand" evidence="10">
    <location>
        <begin position="100"/>
        <end position="102"/>
    </location>
</feature>
<feature type="turn" evidence="10">
    <location>
        <begin position="105"/>
        <end position="108"/>
    </location>
</feature>
<feature type="helix" evidence="10">
    <location>
        <begin position="113"/>
        <end position="121"/>
    </location>
</feature>
<feature type="strand" evidence="10">
    <location>
        <begin position="128"/>
        <end position="131"/>
    </location>
</feature>
<sequence>MVLESVARIVKVQLPAYLKRLPVPESITGFARLTVSEWLRLLPFLGVLALLGYLAVRPFLPKKKQQKDSLINLKIQKENPKVVNEINIEDLCLTKAAYCRCWRSKTFPACDGSHNKHNELTGDNVGPLILKKKEV</sequence>
<proteinExistence type="evidence at protein level"/>
<keyword id="KW-0001">2Fe-2S</keyword>
<keyword id="KW-0002">3D-structure</keyword>
<keyword id="KW-0072">Autophagy</keyword>
<keyword id="KW-0209">Deafness</keyword>
<keyword id="KW-0219">Diabetes mellitus</keyword>
<keyword id="KW-0903">Direct protein sequencing</keyword>
<keyword id="KW-0256">Endoplasmic reticulum</keyword>
<keyword id="KW-0408">Iron</keyword>
<keyword id="KW-0411">Iron-sulfur</keyword>
<keyword id="KW-0472">Membrane</keyword>
<keyword id="KW-0479">Metal-binding</keyword>
<keyword id="KW-0496">Mitochondrion</keyword>
<keyword id="KW-1000">Mitochondrion outer membrane</keyword>
<keyword id="KW-1267">Proteomics identification</keyword>
<keyword id="KW-1185">Reference proteome</keyword>
<keyword id="KW-0812">Transmembrane</keyword>
<keyword id="KW-1133">Transmembrane helix</keyword>